<keyword id="KW-0002">3D-structure</keyword>
<keyword id="KW-0877">Alternative promoter usage</keyword>
<keyword id="KW-0025">Alternative splicing</keyword>
<keyword id="KW-0965">Cell junction</keyword>
<keyword id="KW-1003">Cell membrane</keyword>
<keyword id="KW-0225">Disease variant</keyword>
<keyword id="KW-0988">Intrahepatic cholestasis</keyword>
<keyword id="KW-0472">Membrane</keyword>
<keyword id="KW-0539">Nucleus</keyword>
<keyword id="KW-0597">Phosphoprotein</keyword>
<keyword id="KW-1267">Proteomics identification</keyword>
<keyword id="KW-1185">Reference proteome</keyword>
<keyword id="KW-0677">Repeat</keyword>
<keyword id="KW-0728">SH3 domain</keyword>
<keyword id="KW-0796">Tight junction</keyword>
<gene>
    <name evidence="20" type="primary">TJP2</name>
    <name type="synonym">X104</name>
    <name evidence="18" type="synonym">ZO2</name>
</gene>
<name>ZO2_HUMAN</name>
<proteinExistence type="evidence at protein level"/>
<comment type="function">
    <text evidence="3">Plays a role in tight junctions and adherens junctions (By similarity). Acts as a positive regulator of RANKL-induced osteoclast differentiation, potentially via mediating downstream transcriptional activity (By similarity).</text>
</comment>
<comment type="subunit">
    <text evidence="2 3 9 11 12 13">Homodimer (PubMed:17897942). Interacts (via PDZ2 domain) with TJP1/ZO1 (via PDZ2 domain) (PubMed:17897942). Interacts with OCLN (By similarity). Interacts with UBN1 (PubMed:18823282). Interacts with SAFB in the nucleus (By similarity). Interacts with SCRIB (PubMed:15975580). Interacts with USP53 (via the C-terminal region) (By similarity). Interacts with claudins, including CLDN1, CLDN2, CLDN3, CLDN5 and CLDN7 (PubMed:12704386). Interacts with CLDN18 (By similarity). Interacts (via N-terminus) with CTNNA1 (By similarity).</text>
</comment>
<comment type="interaction">
    <interactant intactId="EBI-1042602">
        <id>Q9UDY2</id>
    </interactant>
    <interactant intactId="EBI-742828">
        <id>Q14847</id>
        <label>LASP1</label>
    </interactant>
    <organismsDiffer>false</organismsDiffer>
    <experiments>9</experiments>
</comment>
<comment type="subcellular location">
    <subcellularLocation>
        <location evidence="3">Cell junction</location>
        <location evidence="3">Adherens junction</location>
    </subcellularLocation>
    <subcellularLocation>
        <location evidence="1">Cell membrane</location>
        <topology evidence="1">Peripheral membrane protein</topology>
        <orientation evidence="1">Cytoplasmic side</orientation>
    </subcellularLocation>
    <subcellularLocation>
        <location evidence="3">Cell junction</location>
        <location evidence="3">Tight junction</location>
    </subcellularLocation>
    <subcellularLocation>
        <location evidence="1">Nucleus</location>
    </subcellularLocation>
    <text evidence="1 2">Also nuclear under environmental stress conditions and in migratory endothelial cells and subconfluent epithelial cell cultures. Localizes to tight junctions during initial stages of their formation (By similarity).</text>
</comment>
<comment type="alternative products">
    <event type="alternative promoter"/>
    <event type="alternative splicing"/>
    <isoform>
        <id>Q9UDY2-1</id>
        <name>A1</name>
        <sequence type="displayed"/>
    </isoform>
    <isoform>
        <id>Q9UDY2-2</id>
        <name>A2</name>
        <sequence type="described" ref="VSP_003149"/>
    </isoform>
    <isoform>
        <id>Q9UDY2-5</id>
        <name>A3</name>
        <sequence type="described" ref="VSP_007835 VSP_007836"/>
    </isoform>
    <isoform>
        <id>Q9UDY2-3</id>
        <name>C1</name>
        <sequence type="described" ref="VSP_006953"/>
    </isoform>
    <isoform>
        <id>Q9UDY2-4</id>
        <name>C2</name>
        <sequence type="described" ref="VSP_006953 VSP_003149"/>
    </isoform>
    <isoform>
        <id>Q9UDY2-6</id>
        <name>6</name>
        <sequence type="described" ref="VSP_046115 VSP_046116"/>
    </isoform>
    <isoform>
        <id>Q9UDY2-7</id>
        <name>7</name>
        <sequence type="described" ref="VSP_046114"/>
    </isoform>
</comment>
<comment type="tissue specificity">
    <text evidence="8">This protein is found in epithelial cell junctions. Isoform A1 is abundant in the heart and brain. Detected in brain and skeletal muscle. It is present almost exclusively in normal tissues. Isoform C1 is expressed at high level in the kidney, pancreas, heart and placenta. Not detected in brain and skeletal muscle. Found in normal as well as in most neoplastic tissues.</text>
</comment>
<comment type="disease" evidence="9">
    <disease id="DI-00492">
        <name>Hypercholanemia, familial, 1</name>
        <acronym>FHCA1</acronym>
        <description>A disorder characterized by elevated serum bile acid concentrations, itching, and fat malabsorption.</description>
        <dbReference type="MIM" id="607748"/>
    </disease>
    <text>The disease may be caused by variants affecting distinct genetic loci, including the gene represented in this entry.</text>
</comment>
<comment type="disease" evidence="14">
    <disease id="DI-04152">
        <name>Cholestasis, progressive familial intrahepatic, 4</name>
        <acronym>PFIC4</acronym>
        <description>A disorder characterized by early onset of cholestasis that progresses to hepatic fibrosis, cirrhosis, and end-stage liver disease before adulthood. PFIC4 inheritance is autosomal recessive.</description>
        <dbReference type="MIM" id="615878"/>
    </disease>
    <text>The disease is caused by variants affecting the gene represented in this entry.</text>
</comment>
<comment type="miscellaneous">
    <molecule>Isoform A1</molecule>
    <text>Produced by alternative promoter usage.</text>
</comment>
<comment type="miscellaneous">
    <molecule>Isoform A2</molecule>
    <text evidence="19">Produced by alternative splicing of isoform A1.</text>
</comment>
<comment type="miscellaneous">
    <molecule>Isoform A3</molecule>
    <text evidence="19">Produced by alternative splicing of isoform A1.</text>
</comment>
<comment type="miscellaneous">
    <molecule>Isoform C1</molecule>
    <text evidence="19">Produced by alternative promoter usage.</text>
</comment>
<comment type="miscellaneous">
    <molecule>Isoform C2</molecule>
    <text evidence="19">Produced by alternative splicing of isoform C1.</text>
</comment>
<comment type="similarity">
    <text evidence="19">Belongs to the MAGUK family.</text>
</comment>
<comment type="sequence caution" evidence="19">
    <conflict type="frameshift">
        <sequence resource="EMBL-CDS" id="AAA61300"/>
    </conflict>
</comment>
<comment type="online information" name="Atlas of Genetics and Cytogenetics in Oncology and Haematology">
    <link uri="https://atlasgeneticsoncology.org/gene/44347/TJP2"/>
</comment>
<organism>
    <name type="scientific">Homo sapiens</name>
    <name type="common">Human</name>
    <dbReference type="NCBI Taxonomy" id="9606"/>
    <lineage>
        <taxon>Eukaryota</taxon>
        <taxon>Metazoa</taxon>
        <taxon>Chordata</taxon>
        <taxon>Craniata</taxon>
        <taxon>Vertebrata</taxon>
        <taxon>Euteleostomi</taxon>
        <taxon>Mammalia</taxon>
        <taxon>Eutheria</taxon>
        <taxon>Euarchontoglires</taxon>
        <taxon>Primates</taxon>
        <taxon>Haplorrhini</taxon>
        <taxon>Catarrhini</taxon>
        <taxon>Hominidae</taxon>
        <taxon>Homo</taxon>
    </lineage>
</organism>
<dbReference type="EMBL" id="L27476">
    <property type="protein sequence ID" value="AAA61300.1"/>
    <property type="status" value="ALT_FRAME"/>
    <property type="molecule type" value="mRNA"/>
</dbReference>
<dbReference type="EMBL" id="AF177533">
    <property type="protein sequence ID" value="AAD20387.2"/>
    <property type="molecule type" value="Genomic_DNA"/>
</dbReference>
<dbReference type="EMBL" id="AF043195">
    <property type="protein sequence ID" value="AAD20387.2"/>
    <property type="status" value="JOINED"/>
    <property type="molecule type" value="Genomic_DNA"/>
</dbReference>
<dbReference type="EMBL" id="AF043196">
    <property type="protein sequence ID" value="AAD20387.2"/>
    <property type="status" value="JOINED"/>
    <property type="molecule type" value="Genomic_DNA"/>
</dbReference>
<dbReference type="EMBL" id="AF043197">
    <property type="protein sequence ID" value="AAD20387.2"/>
    <property type="status" value="JOINED"/>
    <property type="molecule type" value="Genomic_DNA"/>
</dbReference>
<dbReference type="EMBL" id="AF177518">
    <property type="protein sequence ID" value="AAD20387.2"/>
    <property type="status" value="JOINED"/>
    <property type="molecule type" value="Genomic_DNA"/>
</dbReference>
<dbReference type="EMBL" id="AF177519">
    <property type="protein sequence ID" value="AAD20387.2"/>
    <property type="status" value="JOINED"/>
    <property type="molecule type" value="Genomic_DNA"/>
</dbReference>
<dbReference type="EMBL" id="AF177520">
    <property type="protein sequence ID" value="AAD20387.2"/>
    <property type="status" value="JOINED"/>
    <property type="molecule type" value="Genomic_DNA"/>
</dbReference>
<dbReference type="EMBL" id="AF177521">
    <property type="protein sequence ID" value="AAD20387.2"/>
    <property type="status" value="JOINED"/>
    <property type="molecule type" value="Genomic_DNA"/>
</dbReference>
<dbReference type="EMBL" id="AF177522">
    <property type="protein sequence ID" value="AAD20387.2"/>
    <property type="status" value="JOINED"/>
    <property type="molecule type" value="Genomic_DNA"/>
</dbReference>
<dbReference type="EMBL" id="AF177523">
    <property type="protein sequence ID" value="AAD20387.2"/>
    <property type="status" value="JOINED"/>
    <property type="molecule type" value="Genomic_DNA"/>
</dbReference>
<dbReference type="EMBL" id="AF177524">
    <property type="protein sequence ID" value="AAD20387.2"/>
    <property type="status" value="JOINED"/>
    <property type="molecule type" value="Genomic_DNA"/>
</dbReference>
<dbReference type="EMBL" id="AF177525">
    <property type="protein sequence ID" value="AAD20387.2"/>
    <property type="status" value="JOINED"/>
    <property type="molecule type" value="Genomic_DNA"/>
</dbReference>
<dbReference type="EMBL" id="AF177526">
    <property type="protein sequence ID" value="AAD20387.2"/>
    <property type="status" value="JOINED"/>
    <property type="molecule type" value="Genomic_DNA"/>
</dbReference>
<dbReference type="EMBL" id="AF177527">
    <property type="protein sequence ID" value="AAD20387.2"/>
    <property type="status" value="JOINED"/>
    <property type="molecule type" value="Genomic_DNA"/>
</dbReference>
<dbReference type="EMBL" id="AF177528">
    <property type="protein sequence ID" value="AAD20387.2"/>
    <property type="status" value="JOINED"/>
    <property type="molecule type" value="Genomic_DNA"/>
</dbReference>
<dbReference type="EMBL" id="AF177529">
    <property type="protein sequence ID" value="AAD20387.2"/>
    <property type="status" value="JOINED"/>
    <property type="molecule type" value="Genomic_DNA"/>
</dbReference>
<dbReference type="EMBL" id="AF177530">
    <property type="protein sequence ID" value="AAD20387.2"/>
    <property type="status" value="JOINED"/>
    <property type="molecule type" value="Genomic_DNA"/>
</dbReference>
<dbReference type="EMBL" id="AF177531">
    <property type="protein sequence ID" value="AAD20387.2"/>
    <property type="status" value="JOINED"/>
    <property type="molecule type" value="Genomic_DNA"/>
</dbReference>
<dbReference type="EMBL" id="AF177532">
    <property type="protein sequence ID" value="AAD20387.2"/>
    <property type="status" value="JOINED"/>
    <property type="molecule type" value="Genomic_DNA"/>
</dbReference>
<dbReference type="EMBL" id="AF177533">
    <property type="protein sequence ID" value="AAC02527.2"/>
    <property type="molecule type" value="Genomic_DNA"/>
</dbReference>
<dbReference type="EMBL" id="AF043196">
    <property type="protein sequence ID" value="AAC02527.2"/>
    <property type="status" value="JOINED"/>
    <property type="molecule type" value="Genomic_DNA"/>
</dbReference>
<dbReference type="EMBL" id="AF043197">
    <property type="protein sequence ID" value="AAC02527.2"/>
    <property type="status" value="JOINED"/>
    <property type="molecule type" value="Genomic_DNA"/>
</dbReference>
<dbReference type="EMBL" id="AF177518">
    <property type="protein sequence ID" value="AAC02527.2"/>
    <property type="status" value="JOINED"/>
    <property type="molecule type" value="Genomic_DNA"/>
</dbReference>
<dbReference type="EMBL" id="AF177519">
    <property type="protein sequence ID" value="AAC02527.2"/>
    <property type="status" value="JOINED"/>
    <property type="molecule type" value="Genomic_DNA"/>
</dbReference>
<dbReference type="EMBL" id="AF177520">
    <property type="protein sequence ID" value="AAC02527.2"/>
    <property type="status" value="JOINED"/>
    <property type="molecule type" value="Genomic_DNA"/>
</dbReference>
<dbReference type="EMBL" id="AF177521">
    <property type="protein sequence ID" value="AAC02527.2"/>
    <property type="status" value="JOINED"/>
    <property type="molecule type" value="Genomic_DNA"/>
</dbReference>
<dbReference type="EMBL" id="AF177522">
    <property type="protein sequence ID" value="AAC02527.2"/>
    <property type="status" value="JOINED"/>
    <property type="molecule type" value="Genomic_DNA"/>
</dbReference>
<dbReference type="EMBL" id="AF177523">
    <property type="protein sequence ID" value="AAC02527.2"/>
    <property type="status" value="JOINED"/>
    <property type="molecule type" value="Genomic_DNA"/>
</dbReference>
<dbReference type="EMBL" id="AF177524">
    <property type="protein sequence ID" value="AAC02527.2"/>
    <property type="status" value="JOINED"/>
    <property type="molecule type" value="Genomic_DNA"/>
</dbReference>
<dbReference type="EMBL" id="AF177525">
    <property type="protein sequence ID" value="AAC02527.2"/>
    <property type="status" value="JOINED"/>
    <property type="molecule type" value="Genomic_DNA"/>
</dbReference>
<dbReference type="EMBL" id="AF177526">
    <property type="protein sequence ID" value="AAC02527.2"/>
    <property type="status" value="JOINED"/>
    <property type="molecule type" value="Genomic_DNA"/>
</dbReference>
<dbReference type="EMBL" id="AF177527">
    <property type="protein sequence ID" value="AAC02527.2"/>
    <property type="status" value="JOINED"/>
    <property type="molecule type" value="Genomic_DNA"/>
</dbReference>
<dbReference type="EMBL" id="AF177528">
    <property type="protein sequence ID" value="AAC02527.2"/>
    <property type="status" value="JOINED"/>
    <property type="molecule type" value="Genomic_DNA"/>
</dbReference>
<dbReference type="EMBL" id="AF177529">
    <property type="protein sequence ID" value="AAC02527.2"/>
    <property type="status" value="JOINED"/>
    <property type="molecule type" value="Genomic_DNA"/>
</dbReference>
<dbReference type="EMBL" id="AF177530">
    <property type="protein sequence ID" value="AAC02527.2"/>
    <property type="status" value="JOINED"/>
    <property type="molecule type" value="Genomic_DNA"/>
</dbReference>
<dbReference type="EMBL" id="AF177531">
    <property type="protein sequence ID" value="AAC02527.2"/>
    <property type="status" value="JOINED"/>
    <property type="molecule type" value="Genomic_DNA"/>
</dbReference>
<dbReference type="EMBL" id="AF177532">
    <property type="protein sequence ID" value="AAC02527.2"/>
    <property type="status" value="JOINED"/>
    <property type="molecule type" value="Genomic_DNA"/>
</dbReference>
<dbReference type="EMBL" id="AF177533">
    <property type="protein sequence ID" value="AAD56218.2"/>
    <property type="molecule type" value="Genomic_DNA"/>
</dbReference>
<dbReference type="EMBL" id="AF043195">
    <property type="protein sequence ID" value="AAD56218.2"/>
    <property type="status" value="JOINED"/>
    <property type="molecule type" value="Genomic_DNA"/>
</dbReference>
<dbReference type="EMBL" id="AF043196">
    <property type="protein sequence ID" value="AAD56218.2"/>
    <property type="status" value="JOINED"/>
    <property type="molecule type" value="Genomic_DNA"/>
</dbReference>
<dbReference type="EMBL" id="AF043197">
    <property type="protein sequence ID" value="AAD56218.2"/>
    <property type="status" value="JOINED"/>
    <property type="molecule type" value="Genomic_DNA"/>
</dbReference>
<dbReference type="EMBL" id="AF177518">
    <property type="protein sequence ID" value="AAD56218.2"/>
    <property type="status" value="JOINED"/>
    <property type="molecule type" value="Genomic_DNA"/>
</dbReference>
<dbReference type="EMBL" id="AF177519">
    <property type="protein sequence ID" value="AAD56218.2"/>
    <property type="status" value="JOINED"/>
    <property type="molecule type" value="Genomic_DNA"/>
</dbReference>
<dbReference type="EMBL" id="AF177520">
    <property type="protein sequence ID" value="AAD56218.2"/>
    <property type="status" value="JOINED"/>
    <property type="molecule type" value="Genomic_DNA"/>
</dbReference>
<dbReference type="EMBL" id="AF177521">
    <property type="protein sequence ID" value="AAD56218.2"/>
    <property type="status" value="JOINED"/>
    <property type="molecule type" value="Genomic_DNA"/>
</dbReference>
<dbReference type="EMBL" id="AF177522">
    <property type="protein sequence ID" value="AAD56218.2"/>
    <property type="status" value="JOINED"/>
    <property type="molecule type" value="Genomic_DNA"/>
</dbReference>
<dbReference type="EMBL" id="AF177523">
    <property type="protein sequence ID" value="AAD56218.2"/>
    <property type="status" value="JOINED"/>
    <property type="molecule type" value="Genomic_DNA"/>
</dbReference>
<dbReference type="EMBL" id="AF177524">
    <property type="protein sequence ID" value="AAD56218.2"/>
    <property type="status" value="JOINED"/>
    <property type="molecule type" value="Genomic_DNA"/>
</dbReference>
<dbReference type="EMBL" id="AF177525">
    <property type="protein sequence ID" value="AAD56218.2"/>
    <property type="status" value="JOINED"/>
    <property type="molecule type" value="Genomic_DNA"/>
</dbReference>
<dbReference type="EMBL" id="AF177526">
    <property type="protein sequence ID" value="AAD56218.2"/>
    <property type="status" value="JOINED"/>
    <property type="molecule type" value="Genomic_DNA"/>
</dbReference>
<dbReference type="EMBL" id="AF177527">
    <property type="protein sequence ID" value="AAD56218.2"/>
    <property type="status" value="JOINED"/>
    <property type="molecule type" value="Genomic_DNA"/>
</dbReference>
<dbReference type="EMBL" id="AF177528">
    <property type="protein sequence ID" value="AAD56218.2"/>
    <property type="status" value="JOINED"/>
    <property type="molecule type" value="Genomic_DNA"/>
</dbReference>
<dbReference type="EMBL" id="AF177529">
    <property type="protein sequence ID" value="AAD56218.2"/>
    <property type="status" value="JOINED"/>
    <property type="molecule type" value="Genomic_DNA"/>
</dbReference>
<dbReference type="EMBL" id="AF177532">
    <property type="protein sequence ID" value="AAD56218.2"/>
    <property type="status" value="JOINED"/>
    <property type="molecule type" value="Genomic_DNA"/>
</dbReference>
<dbReference type="EMBL" id="AF177533">
    <property type="protein sequence ID" value="AAD56219.2"/>
    <property type="molecule type" value="Genomic_DNA"/>
</dbReference>
<dbReference type="EMBL" id="AF043196">
    <property type="protein sequence ID" value="AAD56219.2"/>
    <property type="status" value="JOINED"/>
    <property type="molecule type" value="Genomic_DNA"/>
</dbReference>
<dbReference type="EMBL" id="AF043197">
    <property type="protein sequence ID" value="AAD56219.2"/>
    <property type="status" value="JOINED"/>
    <property type="molecule type" value="Genomic_DNA"/>
</dbReference>
<dbReference type="EMBL" id="AF177518">
    <property type="protein sequence ID" value="AAD56219.2"/>
    <property type="status" value="JOINED"/>
    <property type="molecule type" value="Genomic_DNA"/>
</dbReference>
<dbReference type="EMBL" id="AF177519">
    <property type="protein sequence ID" value="AAD56219.2"/>
    <property type="status" value="JOINED"/>
    <property type="molecule type" value="Genomic_DNA"/>
</dbReference>
<dbReference type="EMBL" id="AF177520">
    <property type="protein sequence ID" value="AAD56219.2"/>
    <property type="status" value="JOINED"/>
    <property type="molecule type" value="Genomic_DNA"/>
</dbReference>
<dbReference type="EMBL" id="AF177521">
    <property type="protein sequence ID" value="AAD56219.2"/>
    <property type="status" value="JOINED"/>
    <property type="molecule type" value="Genomic_DNA"/>
</dbReference>
<dbReference type="EMBL" id="AF177522">
    <property type="protein sequence ID" value="AAD56219.2"/>
    <property type="status" value="JOINED"/>
    <property type="molecule type" value="Genomic_DNA"/>
</dbReference>
<dbReference type="EMBL" id="AF177523">
    <property type="protein sequence ID" value="AAD56219.2"/>
    <property type="status" value="JOINED"/>
    <property type="molecule type" value="Genomic_DNA"/>
</dbReference>
<dbReference type="EMBL" id="AF177524">
    <property type="protein sequence ID" value="AAD56219.2"/>
    <property type="status" value="JOINED"/>
    <property type="molecule type" value="Genomic_DNA"/>
</dbReference>
<dbReference type="EMBL" id="AF177525">
    <property type="protein sequence ID" value="AAD56219.2"/>
    <property type="status" value="JOINED"/>
    <property type="molecule type" value="Genomic_DNA"/>
</dbReference>
<dbReference type="EMBL" id="AF177526">
    <property type="protein sequence ID" value="AAD56219.2"/>
    <property type="status" value="JOINED"/>
    <property type="molecule type" value="Genomic_DNA"/>
</dbReference>
<dbReference type="EMBL" id="AF177527">
    <property type="protein sequence ID" value="AAD56219.2"/>
    <property type="status" value="JOINED"/>
    <property type="molecule type" value="Genomic_DNA"/>
</dbReference>
<dbReference type="EMBL" id="AF177528">
    <property type="protein sequence ID" value="AAD56219.2"/>
    <property type="status" value="JOINED"/>
    <property type="molecule type" value="Genomic_DNA"/>
</dbReference>
<dbReference type="EMBL" id="AF177529">
    <property type="protein sequence ID" value="AAD56219.2"/>
    <property type="status" value="JOINED"/>
    <property type="molecule type" value="Genomic_DNA"/>
</dbReference>
<dbReference type="EMBL" id="AF177532">
    <property type="protein sequence ID" value="AAD56219.2"/>
    <property type="status" value="JOINED"/>
    <property type="molecule type" value="Genomic_DNA"/>
</dbReference>
<dbReference type="EMBL" id="AF489824">
    <property type="protein sequence ID" value="AAM28524.1"/>
    <property type="molecule type" value="mRNA"/>
</dbReference>
<dbReference type="EMBL" id="AK295034">
    <property type="protein sequence ID" value="BAH11954.1"/>
    <property type="molecule type" value="mRNA"/>
</dbReference>
<dbReference type="EMBL" id="AK302483">
    <property type="protein sequence ID" value="BAH13722.1"/>
    <property type="molecule type" value="mRNA"/>
</dbReference>
<dbReference type="EMBL" id="AL162730">
    <property type="status" value="NOT_ANNOTATED_CDS"/>
    <property type="molecule type" value="Genomic_DNA"/>
</dbReference>
<dbReference type="EMBL" id="AL358113">
    <property type="status" value="NOT_ANNOTATED_CDS"/>
    <property type="molecule type" value="Genomic_DNA"/>
</dbReference>
<dbReference type="EMBL" id="AL590238">
    <property type="status" value="NOT_ANNOTATED_CDS"/>
    <property type="molecule type" value="Genomic_DNA"/>
</dbReference>
<dbReference type="EMBL" id="BC027592">
    <property type="protein sequence ID" value="AAH27592.1"/>
    <property type="molecule type" value="mRNA"/>
</dbReference>
<dbReference type="EMBL" id="AF083892">
    <property type="protein sequence ID" value="AAC33121.1"/>
    <property type="molecule type" value="mRNA"/>
</dbReference>
<dbReference type="EMBL" id="AF083893">
    <property type="protein sequence ID" value="AAC33122.1"/>
    <property type="molecule type" value="mRNA"/>
</dbReference>
<dbReference type="EMBL" id="U84581">
    <property type="protein sequence ID" value="AAB41794.1"/>
    <property type="molecule type" value="mRNA"/>
</dbReference>
<dbReference type="CCDS" id="CCDS55315.1">
    <molecule id="Q9UDY2-6"/>
</dbReference>
<dbReference type="CCDS" id="CCDS55316.1">
    <molecule id="Q9UDY2-7"/>
</dbReference>
<dbReference type="CCDS" id="CCDS6627.1">
    <molecule id="Q9UDY2-1"/>
</dbReference>
<dbReference type="CCDS" id="CCDS6628.1">
    <molecule id="Q9UDY2-2"/>
</dbReference>
<dbReference type="PIR" id="I54378">
    <property type="entry name" value="I54378"/>
</dbReference>
<dbReference type="RefSeq" id="NP_001163885.1">
    <molecule id="Q9UDY2-4"/>
    <property type="nucleotide sequence ID" value="NM_001170414.2"/>
</dbReference>
<dbReference type="RefSeq" id="NP_001163886.1">
    <molecule id="Q9UDY2-6"/>
    <property type="nucleotide sequence ID" value="NM_001170415.1"/>
</dbReference>
<dbReference type="RefSeq" id="NP_001163887.1">
    <molecule id="Q9UDY2-7"/>
    <property type="nucleotide sequence ID" value="NM_001170416.2"/>
</dbReference>
<dbReference type="RefSeq" id="NP_001356800.1">
    <molecule id="Q9UDY2-3"/>
    <property type="nucleotide sequence ID" value="NM_001369871.1"/>
</dbReference>
<dbReference type="RefSeq" id="NP_004808.2">
    <molecule id="Q9UDY2-1"/>
    <property type="nucleotide sequence ID" value="NM_004817.3"/>
</dbReference>
<dbReference type="RefSeq" id="NP_963923.1">
    <molecule id="Q9UDY2-2"/>
    <property type="nucleotide sequence ID" value="NM_201629.3"/>
</dbReference>
<dbReference type="RefSeq" id="XP_011517508.1">
    <molecule id="Q9UDY2-3"/>
    <property type="nucleotide sequence ID" value="XM_011519206.3"/>
</dbReference>
<dbReference type="RefSeq" id="XP_011517509.1">
    <molecule id="Q9UDY2-3"/>
    <property type="nucleotide sequence ID" value="XM_011519207.3"/>
</dbReference>
<dbReference type="RefSeq" id="XP_011517510.1">
    <molecule id="Q9UDY2-3"/>
    <property type="nucleotide sequence ID" value="XM_011519208.3"/>
</dbReference>
<dbReference type="RefSeq" id="XP_011517511.1">
    <molecule id="Q9UDY2-3"/>
    <property type="nucleotide sequence ID" value="XM_011519209.3"/>
</dbReference>
<dbReference type="RefSeq" id="XP_047280046.1">
    <molecule id="Q9UDY2-3"/>
    <property type="nucleotide sequence ID" value="XM_047424090.1"/>
</dbReference>
<dbReference type="RefSeq" id="XP_047280047.1">
    <molecule id="Q9UDY2-3"/>
    <property type="nucleotide sequence ID" value="XM_047424091.1"/>
</dbReference>
<dbReference type="RefSeq" id="XP_047280048.1">
    <molecule id="Q9UDY2-3"/>
    <property type="nucleotide sequence ID" value="XM_047424092.1"/>
</dbReference>
<dbReference type="RefSeq" id="XP_047280050.1">
    <molecule id="Q9UDY2-3"/>
    <property type="nucleotide sequence ID" value="XM_047424094.1"/>
</dbReference>
<dbReference type="PDB" id="2OSG">
    <property type="method" value="NMR"/>
    <property type="chains" value="A/B=306-385"/>
</dbReference>
<dbReference type="PDB" id="3E17">
    <property type="method" value="X-ray"/>
    <property type="resolution" value="1.75 A"/>
    <property type="chains" value="A/B=306-384"/>
</dbReference>
<dbReference type="PDBsum" id="2OSG"/>
<dbReference type="PDBsum" id="3E17"/>
<dbReference type="BMRB" id="Q9UDY2"/>
<dbReference type="SMR" id="Q9UDY2"/>
<dbReference type="BioGRID" id="114809">
    <property type="interactions" value="310"/>
</dbReference>
<dbReference type="ELM" id="Q9UDY2"/>
<dbReference type="FunCoup" id="Q9UDY2">
    <property type="interactions" value="2293"/>
</dbReference>
<dbReference type="IntAct" id="Q9UDY2">
    <property type="interactions" value="128"/>
</dbReference>
<dbReference type="MINT" id="Q9UDY2"/>
<dbReference type="STRING" id="9606.ENSP00000438262"/>
<dbReference type="GlyGen" id="Q9UDY2">
    <property type="glycosylation" value="3 sites, 2 N-linked glycans (1 site), 1 O-linked glycan (2 sites)"/>
</dbReference>
<dbReference type="iPTMnet" id="Q9UDY2"/>
<dbReference type="MetOSite" id="Q9UDY2"/>
<dbReference type="PhosphoSitePlus" id="Q9UDY2"/>
<dbReference type="BioMuta" id="TJP2"/>
<dbReference type="DMDM" id="317373313"/>
<dbReference type="jPOST" id="Q9UDY2"/>
<dbReference type="MassIVE" id="Q9UDY2"/>
<dbReference type="PaxDb" id="9606-ENSP00000438262"/>
<dbReference type="PeptideAtlas" id="Q9UDY2"/>
<dbReference type="ProteomicsDB" id="26127"/>
<dbReference type="ProteomicsDB" id="27714"/>
<dbReference type="ProteomicsDB" id="84127">
    <molecule id="Q9UDY2-1"/>
</dbReference>
<dbReference type="ProteomicsDB" id="84128">
    <molecule id="Q9UDY2-2"/>
</dbReference>
<dbReference type="ProteomicsDB" id="84129">
    <molecule id="Q9UDY2-3"/>
</dbReference>
<dbReference type="ProteomicsDB" id="84130">
    <molecule id="Q9UDY2-4"/>
</dbReference>
<dbReference type="ProteomicsDB" id="84131">
    <molecule id="Q9UDY2-5"/>
</dbReference>
<dbReference type="Pumba" id="Q9UDY2"/>
<dbReference type="Antibodypedia" id="784">
    <property type="antibodies" value="414 antibodies from 37 providers"/>
</dbReference>
<dbReference type="DNASU" id="9414"/>
<dbReference type="Ensembl" id="ENST00000348208.9">
    <molecule id="Q9UDY2-2"/>
    <property type="protein sequence ID" value="ENSP00000345893.4"/>
    <property type="gene ID" value="ENSG00000119139.21"/>
</dbReference>
<dbReference type="Ensembl" id="ENST00000377245.9">
    <molecule id="Q9UDY2-1"/>
    <property type="protein sequence ID" value="ENSP00000366453.4"/>
    <property type="gene ID" value="ENSG00000119139.21"/>
</dbReference>
<dbReference type="Ensembl" id="ENST00000535702.6">
    <molecule id="Q9UDY2-6"/>
    <property type="protein sequence ID" value="ENSP00000442090.1"/>
    <property type="gene ID" value="ENSG00000119139.21"/>
</dbReference>
<dbReference type="Ensembl" id="ENST00000539225.2">
    <molecule id="Q9UDY2-7"/>
    <property type="protein sequence ID" value="ENSP00000438262.1"/>
    <property type="gene ID" value="ENSG00000119139.21"/>
</dbReference>
<dbReference type="GeneID" id="9414"/>
<dbReference type="KEGG" id="hsa:9414"/>
<dbReference type="MANE-Select" id="ENST00000377245.9">
    <property type="protein sequence ID" value="ENSP00000366453.4"/>
    <property type="RefSeq nucleotide sequence ID" value="NM_004817.4"/>
    <property type="RefSeq protein sequence ID" value="NP_004808.2"/>
</dbReference>
<dbReference type="UCSC" id="uc004ahd.4">
    <molecule id="Q9UDY2-1"/>
    <property type="organism name" value="human"/>
</dbReference>
<dbReference type="AGR" id="HGNC:11828"/>
<dbReference type="CTD" id="9414"/>
<dbReference type="DisGeNET" id="9414"/>
<dbReference type="GeneCards" id="TJP2"/>
<dbReference type="HGNC" id="HGNC:11828">
    <property type="gene designation" value="TJP2"/>
</dbReference>
<dbReference type="HPA" id="ENSG00000119139">
    <property type="expression patterns" value="Low tissue specificity"/>
</dbReference>
<dbReference type="MalaCards" id="TJP2"/>
<dbReference type="MIM" id="607709">
    <property type="type" value="gene"/>
</dbReference>
<dbReference type="MIM" id="607748">
    <property type="type" value="phenotype"/>
</dbReference>
<dbReference type="MIM" id="615878">
    <property type="type" value="phenotype"/>
</dbReference>
<dbReference type="neXtProt" id="NX_Q9UDY2"/>
<dbReference type="OpenTargets" id="ENSG00000119139"/>
<dbReference type="Orphanet" id="238475">
    <property type="disease" value="Familial hypercholanemia"/>
</dbReference>
<dbReference type="Orphanet" id="480483">
    <property type="disease" value="Progressive familial intrahepatic cholestasis type 4"/>
</dbReference>
<dbReference type="Orphanet" id="90635">
    <property type="disease" value="Rare autosomal dominant non-syndromic sensorineural deafness type DFNA"/>
</dbReference>
<dbReference type="PharmGKB" id="PA36533"/>
<dbReference type="VEuPathDB" id="HostDB:ENSG00000119139"/>
<dbReference type="eggNOG" id="KOG3580">
    <property type="taxonomic scope" value="Eukaryota"/>
</dbReference>
<dbReference type="GeneTree" id="ENSGT00940000158634"/>
<dbReference type="HOGENOM" id="CLU_006234_1_0_1"/>
<dbReference type="InParanoid" id="Q9UDY2"/>
<dbReference type="OrthoDB" id="418634at2759"/>
<dbReference type="PAN-GO" id="Q9UDY2">
    <property type="GO annotations" value="8 GO annotations based on evolutionary models"/>
</dbReference>
<dbReference type="PhylomeDB" id="Q9UDY2"/>
<dbReference type="TreeFam" id="TF315957"/>
<dbReference type="PathwayCommons" id="Q9UDY2"/>
<dbReference type="Reactome" id="R-HSA-2028269">
    <property type="pathway name" value="Signaling by Hippo"/>
</dbReference>
<dbReference type="Reactome" id="R-HSA-351906">
    <property type="pathway name" value="Apoptotic cleavage of cell adhesion proteins"/>
</dbReference>
<dbReference type="Reactome" id="R-HSA-8980692">
    <property type="pathway name" value="RHOA GTPase cycle"/>
</dbReference>
<dbReference type="Reactome" id="R-HSA-9013026">
    <property type="pathway name" value="RHOB GTPase cycle"/>
</dbReference>
<dbReference type="Reactome" id="R-HSA-9013106">
    <property type="pathway name" value="RHOC GTPase cycle"/>
</dbReference>
<dbReference type="SignaLink" id="Q9UDY2"/>
<dbReference type="SIGNOR" id="Q9UDY2"/>
<dbReference type="BioGRID-ORCS" id="9414">
    <property type="hits" value="15 hits in 1157 CRISPR screens"/>
</dbReference>
<dbReference type="CD-CODE" id="CCFFAF5A">
    <property type="entry name" value="Junctional condensate"/>
</dbReference>
<dbReference type="ChiTaRS" id="TJP2">
    <property type="organism name" value="human"/>
</dbReference>
<dbReference type="EvolutionaryTrace" id="Q9UDY2"/>
<dbReference type="GeneWiki" id="Tight_junction_protein_2"/>
<dbReference type="GenomeRNAi" id="9414"/>
<dbReference type="Pharos" id="Q9UDY2">
    <property type="development level" value="Tbio"/>
</dbReference>
<dbReference type="PRO" id="PR:Q9UDY2"/>
<dbReference type="Proteomes" id="UP000005640">
    <property type="component" value="Chromosome 9"/>
</dbReference>
<dbReference type="RNAct" id="Q9UDY2">
    <property type="molecule type" value="protein"/>
</dbReference>
<dbReference type="Bgee" id="ENSG00000119139">
    <property type="expression patterns" value="Expressed in corpus callosum and 96 other cell types or tissues"/>
</dbReference>
<dbReference type="ExpressionAtlas" id="Q9UDY2">
    <property type="expression patterns" value="baseline and differential"/>
</dbReference>
<dbReference type="GO" id="GO:0005912">
    <property type="term" value="C:adherens junction"/>
    <property type="evidence" value="ECO:0007669"/>
    <property type="project" value="UniProtKB-SubCell"/>
</dbReference>
<dbReference type="GO" id="GO:0005923">
    <property type="term" value="C:bicellular tight junction"/>
    <property type="evidence" value="ECO:0000314"/>
    <property type="project" value="UniProtKB"/>
</dbReference>
<dbReference type="GO" id="GO:0044291">
    <property type="term" value="C:cell-cell contact zone"/>
    <property type="evidence" value="ECO:0000314"/>
    <property type="project" value="ARUK-UCL"/>
</dbReference>
<dbReference type="GO" id="GO:0005829">
    <property type="term" value="C:cytosol"/>
    <property type="evidence" value="ECO:0000304"/>
    <property type="project" value="Reactome"/>
</dbReference>
<dbReference type="GO" id="GO:0005654">
    <property type="term" value="C:nucleoplasm"/>
    <property type="evidence" value="ECO:0000304"/>
    <property type="project" value="Reactome"/>
</dbReference>
<dbReference type="GO" id="GO:0005634">
    <property type="term" value="C:nucleus"/>
    <property type="evidence" value="ECO:0000314"/>
    <property type="project" value="ARUK-UCL"/>
</dbReference>
<dbReference type="GO" id="GO:0005886">
    <property type="term" value="C:plasma membrane"/>
    <property type="evidence" value="ECO:0000314"/>
    <property type="project" value="ARUK-UCL"/>
</dbReference>
<dbReference type="GO" id="GO:0045296">
    <property type="term" value="F:cadherin binding"/>
    <property type="evidence" value="ECO:0007005"/>
    <property type="project" value="BHF-UCL"/>
</dbReference>
<dbReference type="GO" id="GO:0050839">
    <property type="term" value="F:cell adhesion molecule binding"/>
    <property type="evidence" value="ECO:0000318"/>
    <property type="project" value="GO_Central"/>
</dbReference>
<dbReference type="GO" id="GO:0004385">
    <property type="term" value="F:guanylate kinase activity"/>
    <property type="evidence" value="ECO:0000304"/>
    <property type="project" value="ProtInc"/>
</dbReference>
<dbReference type="GO" id="GO:0019904">
    <property type="term" value="F:protein domain specific binding"/>
    <property type="evidence" value="ECO:0000353"/>
    <property type="project" value="UniProtKB"/>
</dbReference>
<dbReference type="GO" id="GO:1990782">
    <property type="term" value="F:protein tyrosine kinase binding"/>
    <property type="evidence" value="ECO:0000353"/>
    <property type="project" value="ARUK-UCL"/>
</dbReference>
<dbReference type="GO" id="GO:0030674">
    <property type="term" value="F:protein-macromolecule adaptor activity"/>
    <property type="evidence" value="ECO:0000314"/>
    <property type="project" value="UniProtKB"/>
</dbReference>
<dbReference type="GO" id="GO:0098609">
    <property type="term" value="P:cell-cell adhesion"/>
    <property type="evidence" value="ECO:0000318"/>
    <property type="project" value="GO_Central"/>
</dbReference>
<dbReference type="GO" id="GO:0045216">
    <property type="term" value="P:cell-cell junction organization"/>
    <property type="evidence" value="ECO:0000318"/>
    <property type="project" value="GO_Central"/>
</dbReference>
<dbReference type="GO" id="GO:0090557">
    <property type="term" value="P:establishment of endothelial intestinal barrier"/>
    <property type="evidence" value="ECO:0000315"/>
    <property type="project" value="UniProtKB"/>
</dbReference>
<dbReference type="GO" id="GO:0034109">
    <property type="term" value="P:homotypic cell-cell adhesion"/>
    <property type="evidence" value="ECO:0000314"/>
    <property type="project" value="ARUK-UCL"/>
</dbReference>
<dbReference type="GO" id="GO:0050892">
    <property type="term" value="P:intestinal absorption"/>
    <property type="evidence" value="ECO:0000315"/>
    <property type="project" value="UniProtKB"/>
</dbReference>
<dbReference type="GO" id="GO:0035633">
    <property type="term" value="P:maintenance of blood-brain barrier"/>
    <property type="evidence" value="ECO:0000303"/>
    <property type="project" value="ARUK-UCL"/>
</dbReference>
<dbReference type="GO" id="GO:1905605">
    <property type="term" value="P:positive regulation of blood-brain barrier permeability"/>
    <property type="evidence" value="ECO:0000315"/>
    <property type="project" value="ARUK-UCL"/>
</dbReference>
<dbReference type="GO" id="GO:0150105">
    <property type="term" value="P:protein localization to cell-cell junction"/>
    <property type="evidence" value="ECO:0000318"/>
    <property type="project" value="GO_Central"/>
</dbReference>
<dbReference type="GO" id="GO:0090559">
    <property type="term" value="P:regulation of membrane permeability"/>
    <property type="evidence" value="ECO:0000315"/>
    <property type="project" value="UniProtKB"/>
</dbReference>
<dbReference type="CDD" id="cd06727">
    <property type="entry name" value="PDZ1_ZO1-like"/>
    <property type="match status" value="1"/>
</dbReference>
<dbReference type="CDD" id="cd06728">
    <property type="entry name" value="PDZ2_ZO1-like_ds"/>
    <property type="match status" value="1"/>
</dbReference>
<dbReference type="CDD" id="cd06729">
    <property type="entry name" value="PDZ3_ZO1-like_domain"/>
    <property type="match status" value="1"/>
</dbReference>
<dbReference type="CDD" id="cd12027">
    <property type="entry name" value="SH3_ZO-2"/>
    <property type="match status" value="1"/>
</dbReference>
<dbReference type="FunFam" id="2.30.42.10:FF:000009">
    <property type="entry name" value="Putative tight junction protein ZO-1"/>
    <property type="match status" value="1"/>
</dbReference>
<dbReference type="FunFam" id="2.30.42.10:FF:000013">
    <property type="entry name" value="Putative tight junction protein ZO-1"/>
    <property type="match status" value="1"/>
</dbReference>
<dbReference type="FunFam" id="3.40.50.300:FF:000110">
    <property type="entry name" value="tight junction protein ZO-1 isoform X1"/>
    <property type="match status" value="1"/>
</dbReference>
<dbReference type="FunFam" id="2.30.30.40:FF:000081">
    <property type="entry name" value="Tight junction protein ZO-2 isoform 2"/>
    <property type="match status" value="1"/>
</dbReference>
<dbReference type="FunFam" id="2.30.42.10:FF:000075">
    <property type="entry name" value="Tight junction protein ZO-2 isoform 2"/>
    <property type="match status" value="1"/>
</dbReference>
<dbReference type="Gene3D" id="2.30.42.10">
    <property type="match status" value="3"/>
</dbReference>
<dbReference type="Gene3D" id="3.40.50.300">
    <property type="entry name" value="P-loop containing nucleotide triphosphate hydrolases"/>
    <property type="match status" value="1"/>
</dbReference>
<dbReference type="Gene3D" id="2.30.30.40">
    <property type="entry name" value="SH3 Domains"/>
    <property type="match status" value="1"/>
</dbReference>
<dbReference type="InterPro" id="IPR008145">
    <property type="entry name" value="GK/Ca_channel_bsu"/>
</dbReference>
<dbReference type="InterPro" id="IPR008144">
    <property type="entry name" value="Guanylate_kin-like_dom"/>
</dbReference>
<dbReference type="InterPro" id="IPR027417">
    <property type="entry name" value="P-loop_NTPase"/>
</dbReference>
<dbReference type="InterPro" id="IPR001478">
    <property type="entry name" value="PDZ"/>
</dbReference>
<dbReference type="InterPro" id="IPR036034">
    <property type="entry name" value="PDZ_sf"/>
</dbReference>
<dbReference type="InterPro" id="IPR036028">
    <property type="entry name" value="SH3-like_dom_sf"/>
</dbReference>
<dbReference type="InterPro" id="IPR001452">
    <property type="entry name" value="SH3_domain"/>
</dbReference>
<dbReference type="InterPro" id="IPR005417">
    <property type="entry name" value="ZO"/>
</dbReference>
<dbReference type="InterPro" id="IPR005419">
    <property type="entry name" value="ZO-2"/>
</dbReference>
<dbReference type="InterPro" id="IPR035598">
    <property type="entry name" value="ZO-2_SH3"/>
</dbReference>
<dbReference type="PANTHER" id="PTHR13865">
    <property type="entry name" value="TIGHT JUNCTION PROTEIN"/>
    <property type="match status" value="1"/>
</dbReference>
<dbReference type="PANTHER" id="PTHR13865:SF26">
    <property type="entry name" value="TIGHT JUNCTION PROTEIN ZO-2"/>
    <property type="match status" value="1"/>
</dbReference>
<dbReference type="Pfam" id="PF00625">
    <property type="entry name" value="Guanylate_kin"/>
    <property type="match status" value="1"/>
</dbReference>
<dbReference type="Pfam" id="PF00595">
    <property type="entry name" value="PDZ"/>
    <property type="match status" value="3"/>
</dbReference>
<dbReference type="Pfam" id="PF07653">
    <property type="entry name" value="SH3_2"/>
    <property type="match status" value="1"/>
</dbReference>
<dbReference type="PRINTS" id="PR01597">
    <property type="entry name" value="ZONOCCLUDNS"/>
</dbReference>
<dbReference type="PRINTS" id="PR01599">
    <property type="entry name" value="ZONOCCLUDNS2"/>
</dbReference>
<dbReference type="SMART" id="SM00072">
    <property type="entry name" value="GuKc"/>
    <property type="match status" value="1"/>
</dbReference>
<dbReference type="SMART" id="SM00228">
    <property type="entry name" value="PDZ"/>
    <property type="match status" value="3"/>
</dbReference>
<dbReference type="SUPFAM" id="SSF52540">
    <property type="entry name" value="P-loop containing nucleoside triphosphate hydrolases"/>
    <property type="match status" value="1"/>
</dbReference>
<dbReference type="SUPFAM" id="SSF50156">
    <property type="entry name" value="PDZ domain-like"/>
    <property type="match status" value="3"/>
</dbReference>
<dbReference type="SUPFAM" id="SSF50044">
    <property type="entry name" value="SH3-domain"/>
    <property type="match status" value="1"/>
</dbReference>
<dbReference type="PROSITE" id="PS50052">
    <property type="entry name" value="GUANYLATE_KINASE_2"/>
    <property type="match status" value="1"/>
</dbReference>
<dbReference type="PROSITE" id="PS50106">
    <property type="entry name" value="PDZ"/>
    <property type="match status" value="3"/>
</dbReference>
<dbReference type="PROSITE" id="PS50002">
    <property type="entry name" value="SH3"/>
    <property type="match status" value="1"/>
</dbReference>
<accession>Q9UDY2</accession>
<accession>A2A3H9</accession>
<accession>B7Z2R8</accession>
<accession>B7Z7T6</accession>
<accession>F5H301</accession>
<accession>F5H886</accession>
<accession>Q15883</accession>
<accession>Q5VXL0</accession>
<accession>Q5VXL1</accession>
<accession>Q8N756</accession>
<accession>Q8NI14</accession>
<accession>Q99839</accession>
<accession>Q9UDY0</accession>
<accession>Q9UDY1</accession>
<evidence type="ECO:0000250" key="1"/>
<evidence type="ECO:0000250" key="2">
    <source>
        <dbReference type="UniProtKB" id="Q95168"/>
    </source>
</evidence>
<evidence type="ECO:0000250" key="3">
    <source>
        <dbReference type="UniProtKB" id="Q9Z0U1"/>
    </source>
</evidence>
<evidence type="ECO:0000255" key="4">
    <source>
        <dbReference type="PROSITE-ProRule" id="PRU00100"/>
    </source>
</evidence>
<evidence type="ECO:0000255" key="5">
    <source>
        <dbReference type="PROSITE-ProRule" id="PRU00143"/>
    </source>
</evidence>
<evidence type="ECO:0000255" key="6">
    <source>
        <dbReference type="PROSITE-ProRule" id="PRU00192"/>
    </source>
</evidence>
<evidence type="ECO:0000256" key="7">
    <source>
        <dbReference type="SAM" id="MobiDB-lite"/>
    </source>
</evidence>
<evidence type="ECO:0000269" key="8">
    <source>
    </source>
</evidence>
<evidence type="ECO:0000269" key="9">
    <source>
    </source>
</evidence>
<evidence type="ECO:0000269" key="10">
    <source>
    </source>
</evidence>
<evidence type="ECO:0000269" key="11">
    <source>
    </source>
</evidence>
<evidence type="ECO:0000269" key="12">
    <source>
    </source>
</evidence>
<evidence type="ECO:0000269" key="13">
    <source>
    </source>
</evidence>
<evidence type="ECO:0000269" key="14">
    <source>
    </source>
</evidence>
<evidence type="ECO:0000269" key="15">
    <source>
    </source>
</evidence>
<evidence type="ECO:0000269" key="16">
    <source ref="3"/>
</evidence>
<evidence type="ECO:0000303" key="17">
    <source>
    </source>
</evidence>
<evidence type="ECO:0000303" key="18">
    <source ref="3"/>
</evidence>
<evidence type="ECO:0000305" key="19"/>
<evidence type="ECO:0000312" key="20">
    <source>
        <dbReference type="HGNC" id="HGNC:11828"/>
    </source>
</evidence>
<evidence type="ECO:0007744" key="21">
    <source>
    </source>
</evidence>
<evidence type="ECO:0007744" key="22">
    <source>
    </source>
</evidence>
<evidence type="ECO:0007744" key="23">
    <source>
    </source>
</evidence>
<evidence type="ECO:0007744" key="24">
    <source>
    </source>
</evidence>
<evidence type="ECO:0007744" key="25">
    <source>
    </source>
</evidence>
<evidence type="ECO:0007744" key="26">
    <source>
    </source>
</evidence>
<evidence type="ECO:0007744" key="27">
    <source>
    </source>
</evidence>
<evidence type="ECO:0007744" key="28">
    <source>
    </source>
</evidence>
<evidence type="ECO:0007744" key="29">
    <source>
    </source>
</evidence>
<evidence type="ECO:0007829" key="30">
    <source>
        <dbReference type="PDB" id="2OSG"/>
    </source>
</evidence>
<evidence type="ECO:0007829" key="31">
    <source>
        <dbReference type="PDB" id="3E17"/>
    </source>
</evidence>
<feature type="chain" id="PRO_0000094543" description="Tight junction protein 2">
    <location>
        <begin position="1"/>
        <end position="1190"/>
    </location>
</feature>
<feature type="domain" description="PDZ 1" evidence="5">
    <location>
        <begin position="33"/>
        <end position="120"/>
    </location>
</feature>
<feature type="domain" description="PDZ 2" evidence="5">
    <location>
        <begin position="307"/>
        <end position="385"/>
    </location>
</feature>
<feature type="domain" description="PDZ 3" evidence="5">
    <location>
        <begin position="509"/>
        <end position="590"/>
    </location>
</feature>
<feature type="domain" description="SH3" evidence="6">
    <location>
        <begin position="604"/>
        <end position="669"/>
    </location>
</feature>
<feature type="domain" description="Guanylate kinase-like" evidence="4">
    <location>
        <begin position="678"/>
        <end position="876"/>
    </location>
</feature>
<feature type="region of interest" description="Disordered" evidence="7">
    <location>
        <begin position="152"/>
        <end position="306"/>
    </location>
</feature>
<feature type="region of interest" description="Disordered" evidence="7">
    <location>
        <begin position="408"/>
        <end position="506"/>
    </location>
</feature>
<feature type="region of interest" description="Disordered" evidence="7">
    <location>
        <begin position="920"/>
        <end position="1079"/>
    </location>
</feature>
<feature type="region of interest" description="Disordered" evidence="7">
    <location>
        <begin position="1105"/>
        <end position="1190"/>
    </location>
</feature>
<feature type="region of interest" description="Interaction with SCRIB" evidence="11">
    <location>
        <begin position="1188"/>
        <end position="1190"/>
    </location>
</feature>
<feature type="compositionally biased region" description="Basic and acidic residues" evidence="7">
    <location>
        <begin position="169"/>
        <end position="291"/>
    </location>
</feature>
<feature type="compositionally biased region" description="Basic and acidic residues" evidence="7">
    <location>
        <begin position="415"/>
        <end position="446"/>
    </location>
</feature>
<feature type="compositionally biased region" description="Basic and acidic residues" evidence="7">
    <location>
        <begin position="956"/>
        <end position="967"/>
    </location>
</feature>
<feature type="compositionally biased region" description="Basic and acidic residues" evidence="7">
    <location>
        <begin position="994"/>
        <end position="1014"/>
    </location>
</feature>
<feature type="compositionally biased region" description="Acidic residues" evidence="7">
    <location>
        <begin position="1060"/>
        <end position="1072"/>
    </location>
</feature>
<feature type="compositionally biased region" description="Basic and acidic residues" evidence="7">
    <location>
        <begin position="1166"/>
        <end position="1175"/>
    </location>
</feature>
<feature type="modified residue" description="Phosphoserine" evidence="28">
    <location>
        <position position="16"/>
    </location>
</feature>
<feature type="modified residue" description="Phosphoserine" evidence="21 25 27 28 29">
    <location>
        <position position="130"/>
    </location>
</feature>
<feature type="modified residue" description="Phosphoserine" evidence="28">
    <location>
        <position position="150"/>
    </location>
</feature>
<feature type="modified residue" description="Phosphoserine" evidence="27">
    <location>
        <position position="153"/>
    </location>
</feature>
<feature type="modified residue" description="Phosphoserine" evidence="3">
    <location>
        <position position="163"/>
    </location>
</feature>
<feature type="modified residue" description="Phosphoserine" evidence="27">
    <location>
        <position position="168"/>
    </location>
</feature>
<feature type="modified residue" description="Phosphoserine" evidence="23 25 28">
    <location>
        <position position="170"/>
    </location>
</feature>
<feature type="modified residue" description="Phosphoserine" evidence="22 23 25 27 28">
    <location>
        <position position="174"/>
    </location>
</feature>
<feature type="modified residue" description="Phosphoserine" evidence="27">
    <location>
        <position position="200"/>
    </location>
</feature>
<feature type="modified residue" description="Phosphoserine" evidence="27">
    <location>
        <position position="220"/>
    </location>
</feature>
<feature type="modified residue" description="Phosphoserine" evidence="28">
    <location>
        <position position="232"/>
    </location>
</feature>
<feature type="modified residue" description="Phosphoserine" evidence="22 23 24 25 27 28">
    <location>
        <position position="244"/>
    </location>
</feature>
<feature type="modified residue" description="Phosphoserine" evidence="23 28">
    <location>
        <position position="266"/>
    </location>
</feature>
<feature type="modified residue" description="Phosphoserine" evidence="29">
    <location>
        <position position="325"/>
    </location>
</feature>
<feature type="modified residue" description="Phosphoserine" evidence="3">
    <location>
        <position position="398"/>
    </location>
</feature>
<feature type="modified residue" description="Phosphoserine" evidence="23">
    <location>
        <position position="400"/>
    </location>
</feature>
<feature type="modified residue" description="Phosphoserine" evidence="29">
    <location>
        <position position="406"/>
    </location>
</feature>
<feature type="modified residue" description="Phosphoserine" evidence="28">
    <location>
        <position position="415"/>
    </location>
</feature>
<feature type="modified residue" description="Phosphoserine" evidence="28">
    <location>
        <position position="424"/>
    </location>
</feature>
<feature type="modified residue" description="Phosphoserine" evidence="27 28">
    <location>
        <position position="430"/>
    </location>
</feature>
<feature type="modified residue" description="Phosphoserine" evidence="28 29">
    <location>
        <position position="431"/>
    </location>
</feature>
<feature type="modified residue" description="Phosphothreonine" evidence="23 28">
    <location>
        <position position="455"/>
    </location>
</feature>
<feature type="modified residue" description="Phosphoserine" evidence="28">
    <location>
        <position position="499"/>
    </location>
</feature>
<feature type="modified residue" description="Phosphotyrosine" evidence="3">
    <location>
        <position position="574"/>
    </location>
</feature>
<feature type="modified residue" description="Phosphoserine" evidence="22 29">
    <location>
        <position position="702"/>
    </location>
</feature>
<feature type="modified residue" description="Phosphoserine" evidence="3">
    <location>
        <position position="902"/>
    </location>
</feature>
<feature type="modified residue" description="Phosphothreonine" evidence="3">
    <location>
        <position position="905"/>
    </location>
</feature>
<feature type="modified residue" description="Phosphoserine" evidence="28">
    <location>
        <position position="913"/>
    </location>
</feature>
<feature type="modified residue" description="Phosphoserine" evidence="23 25">
    <location>
        <position position="920"/>
    </location>
</feature>
<feature type="modified residue" description="Phosphothreonine" evidence="23 25">
    <location>
        <position position="925"/>
    </location>
</feature>
<feature type="modified residue" description="Phosphothreonine" evidence="23">
    <location>
        <position position="933"/>
    </location>
</feature>
<feature type="modified residue" description="Phosphoserine" evidence="22 28 29">
    <location>
        <position position="966"/>
    </location>
</feature>
<feature type="modified residue" description="Phosphoserine" evidence="23 27 28 29">
    <location>
        <position position="978"/>
    </location>
</feature>
<feature type="modified residue" description="Phosphoserine" evidence="22 23 25 27 28 29">
    <location>
        <position position="986"/>
    </location>
</feature>
<feature type="modified residue" description="Phosphoserine" evidence="3">
    <location>
        <position position="1006"/>
    </location>
</feature>
<feature type="modified residue" description="Phosphoserine" evidence="23 27 28">
    <location>
        <position position="1067"/>
    </location>
</feature>
<feature type="modified residue" description="Phosphoserine" evidence="23 27">
    <location>
        <position position="1068"/>
    </location>
</feature>
<feature type="modified residue" description="Phosphotyrosine" evidence="28">
    <location>
        <position position="1118"/>
    </location>
</feature>
<feature type="modified residue" description="Phosphothreonine" evidence="23">
    <location>
        <position position="1131"/>
    </location>
</feature>
<feature type="modified residue" description="Phosphoserine" evidence="27">
    <location>
        <position position="1147"/>
    </location>
</feature>
<feature type="modified residue" description="Phosphoserine" evidence="23 24 25 27 28 29">
    <location>
        <position position="1159"/>
    </location>
</feature>
<feature type="splice variant" id="VSP_006953" description="In isoform C1 and isoform C2." evidence="19">
    <location>
        <begin position="1"/>
        <end position="23"/>
    </location>
</feature>
<feature type="splice variant" id="VSP_046114" description="In isoform 7." evidence="17">
    <original>MPVRGDRGFPPRRELSGWLR</original>
    <variation>MKTAQALHRMWIQAVKKLRRWKGRVSPSASSPLVFPNLSSWEGEGSKTILT</variation>
    <location>
        <begin position="1"/>
        <end position="20"/>
    </location>
</feature>
<feature type="splice variant" id="VSP_046115" description="In isoform 6." evidence="17">
    <original>MPVRGDRGFPPRRELSGWL</original>
    <variation>MKTAQALHRMWIQAVKKLRRWKG</variation>
    <location>
        <begin position="1"/>
        <end position="19"/>
    </location>
</feature>
<feature type="splice variant" id="VSP_003149" description="In isoform A2 and isoform C2." evidence="19">
    <location>
        <begin position="961"/>
        <end position="1107"/>
    </location>
</feature>
<feature type="splice variant" id="VSP_046116" description="In isoform 6." evidence="17">
    <location>
        <begin position="961"/>
        <end position="997"/>
    </location>
</feature>
<feature type="splice variant" id="VSP_007835" description="In isoform A3." evidence="18">
    <original>SIRKPSPEPRAQMRRAASSDQLRDNSPPPAFKP</original>
    <variation>VRRGRPRAGTGEPGVFLALSWTAVCSGCCGRHS</variation>
    <location>
        <begin position="961"/>
        <end position="993"/>
    </location>
</feature>
<feature type="splice variant" id="VSP_007836" description="In isoform A3." evidence="18">
    <location>
        <begin position="994"/>
        <end position="1190"/>
    </location>
</feature>
<feature type="sequence variant" id="VAR_016004" description="In FHCA1; affects the interaction with claudins; dbSNP:rs121918299." evidence="9">
    <original>V</original>
    <variation>A</variation>
    <location>
        <position position="48"/>
    </location>
</feature>
<feature type="sequence variant" id="VAR_030798" description="In dbSNP:rs2309428." evidence="8 10 15 16 26">
    <original>D</original>
    <variation>E</variation>
    <location>
        <position position="482"/>
    </location>
</feature>
<feature type="sequence variant" id="VAR_046675" description="In dbSNP:rs34774441." evidence="10">
    <original>M</original>
    <variation>I</variation>
    <location>
        <position position="668"/>
    </location>
</feature>
<feature type="sequence variant" id="VAR_046676" description="In dbSNP:rs35797487.">
    <original>S</original>
    <variation>P</variation>
    <location>
        <position position="711"/>
    </location>
</feature>
<feature type="sequence variant" id="VAR_046677" description="In dbSNP:rs1049624." evidence="15">
    <original>K</original>
    <variation>N</variation>
    <location>
        <position position="822"/>
    </location>
</feature>
<feature type="sequence variant" id="VAR_046678" description="In dbSNP:rs1049625." evidence="15">
    <original>N</original>
    <variation>D</variation>
    <location>
        <position position="829"/>
    </location>
</feature>
<feature type="sequence conflict" description="In Ref. 1; AAA61300 and 3; AAM28524." evidence="19" ref="1 3">
    <original>N</original>
    <variation>T</variation>
    <location>
        <position position="411"/>
    </location>
</feature>
<feature type="sequence conflict" description="In Ref. 4; BAH13722." evidence="19" ref="4">
    <original>A</original>
    <variation>V</variation>
    <location>
        <position position="718"/>
    </location>
</feature>
<feature type="sequence conflict" description="In Ref. 1; AAA61300 and 3; AAM28524." evidence="19" ref="1 3">
    <original>I</original>
    <variation>V</variation>
    <location>
        <position position="782"/>
    </location>
</feature>
<feature type="sequence conflict" description="In Ref. 1; AAA61300." evidence="19" ref="1">
    <original>P</original>
    <variation>S</variation>
    <location>
        <position position="808"/>
    </location>
</feature>
<feature type="sequence conflict" description="In Ref. 1; AAA61300." evidence="19" ref="1">
    <original>FFN</original>
    <variation>SFT</variation>
    <location>
        <begin position="812"/>
        <end position="814"/>
    </location>
</feature>
<feature type="sequence conflict" description="In Ref. 1; AAA61300." evidence="19" ref="1">
    <original>K</original>
    <variation>N</variation>
    <location>
        <position position="834"/>
    </location>
</feature>
<feature type="sequence conflict" description="In Ref. 1; AAA61300." evidence="19" ref="1">
    <original>Q</original>
    <variation>H</variation>
    <location>
        <position position="842"/>
    </location>
</feature>
<feature type="sequence conflict" description="In Ref. 1; AAA61300." evidence="19" ref="1">
    <original>P</original>
    <variation>S</variation>
    <location>
        <position position="996"/>
    </location>
</feature>
<feature type="sequence conflict" description="In Ref. 1; AAA61300." evidence="19" ref="1">
    <original>R</original>
    <variation>G</variation>
    <location>
        <position position="1093"/>
    </location>
</feature>
<feature type="sequence conflict" description="In Ref. 4; BAH13722." evidence="19" ref="4">
    <original>I</original>
    <variation>L</variation>
    <location>
        <position position="1110"/>
    </location>
</feature>
<feature type="sequence conflict" description="In Ref. 9; AAB41794." evidence="19" ref="9">
    <original>S</original>
    <variation>N</variation>
    <location>
        <position position="1136"/>
    </location>
</feature>
<feature type="sequence conflict" description="In Ref. 9; AAB41794." evidence="19" ref="9">
    <original>GSYG</original>
    <variation>RSFC</variation>
    <location>
        <begin position="1155"/>
        <end position="1158"/>
    </location>
</feature>
<feature type="sequence conflict" description="In Ref. 9; AAB41794." evidence="19" ref="9">
    <original>EYR</original>
    <variation>IRS</variation>
    <location>
        <begin position="1165"/>
        <end position="1167"/>
    </location>
</feature>
<feature type="strand" evidence="31">
    <location>
        <begin position="306"/>
        <end position="311"/>
    </location>
</feature>
<feature type="strand" evidence="30">
    <location>
        <begin position="315"/>
        <end position="317"/>
    </location>
</feature>
<feature type="strand" evidence="31">
    <location>
        <begin position="321"/>
        <end position="332"/>
    </location>
</feature>
<feature type="helix" evidence="31">
    <location>
        <begin position="337"/>
        <end position="341"/>
    </location>
</feature>
<feature type="strand" evidence="31">
    <location>
        <begin position="349"/>
        <end position="353"/>
    </location>
</feature>
<feature type="helix" evidence="31">
    <location>
        <begin position="363"/>
        <end position="372"/>
    </location>
</feature>
<feature type="turn" evidence="31">
    <location>
        <begin position="373"/>
        <end position="375"/>
    </location>
</feature>
<feature type="strand" evidence="31">
    <location>
        <begin position="376"/>
        <end position="381"/>
    </location>
</feature>
<protein>
    <recommendedName>
        <fullName evidence="20">Tight junction protein 2</fullName>
    </recommendedName>
    <alternativeName>
        <fullName evidence="18">Tight junction protein ZO-2</fullName>
    </alternativeName>
    <alternativeName>
        <fullName>Zona occludens protein 2</fullName>
    </alternativeName>
    <alternativeName>
        <fullName>Zonula occludens protein 2</fullName>
    </alternativeName>
</protein>
<sequence>MPVRGDRGFPPRRELSGWLRAPGMEELIWEQYTVTLQKDSKRGFGIAVSGGRDNPHFENGETSIVISDVLPGGPADGLLQENDRVVMVNGTPMEDVLHSFAVQQLRKSGKVAAIVVKRPRKVQVAALQASPPLDQDDRAFEVMDEFDGRSFRSGYSERSRLNSHGGRSRSWEDSPERGRPHERARSRERDLSRDRSRGRSLERGLDQDHARTRDRSRGRSLERGLDHDFGPSRDRDRDRSRGRSIDQDYERAYHRAYDPDYERAYSPEYRRGARHDARSRGPRSRSREHPHSRSPSPEPRGRPGPIGVLLMKSRANEEYGLRLGSQIFVKEMTRTGLATKDGNLHEGDIILKINGTVTENMSLTDARKLIEKSRGKLQLVVLRDSQQTLINIPSLNDSDSEIEDISEIESNRSFSPEERRHQYSDYDYHSSSEKLKERPSSREDTPSRLSRMGATPTPFKSTGDIAGTVVPETNKEPRYQEDPPAPQPKAAPRTFLRPSPEDEAIYGPNTKMVRFKKGDSVGLRLAGGNDVGIFVAGIQEGTSAEQEGLQEGDQILKVNTQDFRGLVREDAVLYLLEIPKGEMVTILAQSRADVYRDILACGRGDSFFIRSHFECEKETPQSLAFTRGEVFRVVDTLYDGKLGNWLAVRIGNELEKGLIPNKSRAEQMASVQNAQRDNAGDRADFWRMRGQRSGVKKNLRKSREDLTAVVSVSTKFPAYERVLLREAGFKRPVVLFGPIADIAMEKLANELPDWFQTAKTEPKDAGSEKSTGVVRLNTVRQIIEQDKHALLDVTPKAVDLLNYTQWFPIVIFFNPDSRQGVKTMRQRLNPTSNKSSRKLFDQANKLKKTCAHLFTATINLNSANDSWFGSLKDTIQHQQGEAVWVSEGKMEGMDDDPEDRMSYLTAMGADYLSCDSRLISDFEDTDGEGGAYTDNELDEPAEEPLVSSITRSSEPVQHEESIRKPSPEPRAQMRRAASSDQLRDNSPPPAFKPEPPKAKTQNKEESYDFSKSYEYKSNPSAVAGNETPGASTKGYPPPVAAKPTFGRSILKPSTPIPPQEGEEVGESSEEQDNAPKSVLGKVKIFEKMDHKARLQRMQELQEAQNARIEIAQKHPDIYAVPIKTHKPDPGTPQHTSSRPPEPQKAPSRPYQDTRGSYGSDAEEEEYRQQLSEHSKRGYYGQSARYRDTEL</sequence>
<reference key="1">
    <citation type="journal article" date="1994" name="Hum. Mol. Genet.">
        <title>The Friedreich ataxia region: characterization of two novel genes and reduction of the critical region to 300 kb.</title>
        <authorList>
            <person name="Duclos F."/>
            <person name="Rodius F."/>
            <person name="Wrogemann K."/>
            <person name="Mandel J.-L."/>
            <person name="Koenig M."/>
        </authorList>
    </citation>
    <scope>NUCLEOTIDE SEQUENCE [MRNA] (ISOFORM A1)</scope>
    <scope>VARIANTS GLU-482; ASN-822 AND ASP-829</scope>
    <source>
        <tissue>Brain</tissue>
    </source>
</reference>
<reference key="2">
    <citation type="journal article" date="2000" name="Biochim. Biophys. Acta">
        <title>Organization and expression of the human zo-2 gene (tjp-2) in normal and neoplastic tissues.</title>
        <authorList>
            <person name="Chlenski A."/>
            <person name="Ketels K.V."/>
            <person name="Korovaitseva G.I."/>
            <person name="Talamonti M.S."/>
            <person name="Oyasu R."/>
            <person name="Scarpelli D.G."/>
        </authorList>
    </citation>
    <scope>NUCLEOTIDE SEQUENCE [GENOMIC DNA] (ISOFORMS A1; C1; A2 AND C2)</scope>
    <scope>TISSUE SPECIFICITY</scope>
    <scope>ALTERNATIVE PROMOTER USAGE</scope>
    <scope>VARIANT GLU-482</scope>
    <source>
        <tissue>Pancreas</tissue>
    </source>
</reference>
<reference key="3">
    <citation type="submission" date="2002-03" db="EMBL/GenBank/DDBJ databases">
        <title>LIM protein KyoT2 interacts with human tight junction protein ZO-2-i3.</title>
        <authorList>
            <person name="Yan H.H."/>
            <person name="Rong L."/>
            <person name="Qiang S."/>
            <person name="Jian W."/>
            <person name="Peng Z."/>
            <person name="Hua H."/>
            <person name="Hui Z.W."/>
        </authorList>
    </citation>
    <scope>NUCLEOTIDE SEQUENCE [MRNA] (ISOFORM A3)</scope>
    <scope>VARIANT GLU-482</scope>
</reference>
<reference key="4">
    <citation type="journal article" date="2004" name="Nat. Genet.">
        <title>Complete sequencing and characterization of 21,243 full-length human cDNAs.</title>
        <authorList>
            <person name="Ota T."/>
            <person name="Suzuki Y."/>
            <person name="Nishikawa T."/>
            <person name="Otsuki T."/>
            <person name="Sugiyama T."/>
            <person name="Irie R."/>
            <person name="Wakamatsu A."/>
            <person name="Hayashi K."/>
            <person name="Sato H."/>
            <person name="Nagai K."/>
            <person name="Kimura K."/>
            <person name="Makita H."/>
            <person name="Sekine M."/>
            <person name="Obayashi M."/>
            <person name="Nishi T."/>
            <person name="Shibahara T."/>
            <person name="Tanaka T."/>
            <person name="Ishii S."/>
            <person name="Yamamoto J."/>
            <person name="Saito K."/>
            <person name="Kawai Y."/>
            <person name="Isono Y."/>
            <person name="Nakamura Y."/>
            <person name="Nagahari K."/>
            <person name="Murakami K."/>
            <person name="Yasuda T."/>
            <person name="Iwayanagi T."/>
            <person name="Wagatsuma M."/>
            <person name="Shiratori A."/>
            <person name="Sudo H."/>
            <person name="Hosoiri T."/>
            <person name="Kaku Y."/>
            <person name="Kodaira H."/>
            <person name="Kondo H."/>
            <person name="Sugawara M."/>
            <person name="Takahashi M."/>
            <person name="Kanda K."/>
            <person name="Yokoi T."/>
            <person name="Furuya T."/>
            <person name="Kikkawa E."/>
            <person name="Omura Y."/>
            <person name="Abe K."/>
            <person name="Kamihara K."/>
            <person name="Katsuta N."/>
            <person name="Sato K."/>
            <person name="Tanikawa M."/>
            <person name="Yamazaki M."/>
            <person name="Ninomiya K."/>
            <person name="Ishibashi T."/>
            <person name="Yamashita H."/>
            <person name="Murakawa K."/>
            <person name="Fujimori K."/>
            <person name="Tanai H."/>
            <person name="Kimata M."/>
            <person name="Watanabe M."/>
            <person name="Hiraoka S."/>
            <person name="Chiba Y."/>
            <person name="Ishida S."/>
            <person name="Ono Y."/>
            <person name="Takiguchi S."/>
            <person name="Watanabe S."/>
            <person name="Yosida M."/>
            <person name="Hotuta T."/>
            <person name="Kusano J."/>
            <person name="Kanehori K."/>
            <person name="Takahashi-Fujii A."/>
            <person name="Hara H."/>
            <person name="Tanase T.-O."/>
            <person name="Nomura Y."/>
            <person name="Togiya S."/>
            <person name="Komai F."/>
            <person name="Hara R."/>
            <person name="Takeuchi K."/>
            <person name="Arita M."/>
            <person name="Imose N."/>
            <person name="Musashino K."/>
            <person name="Yuuki H."/>
            <person name="Oshima A."/>
            <person name="Sasaki N."/>
            <person name="Aotsuka S."/>
            <person name="Yoshikawa Y."/>
            <person name="Matsunawa H."/>
            <person name="Ichihara T."/>
            <person name="Shiohata N."/>
            <person name="Sano S."/>
            <person name="Moriya S."/>
            <person name="Momiyama H."/>
            <person name="Satoh N."/>
            <person name="Takami S."/>
            <person name="Terashima Y."/>
            <person name="Suzuki O."/>
            <person name="Nakagawa S."/>
            <person name="Senoh A."/>
            <person name="Mizoguchi H."/>
            <person name="Goto Y."/>
            <person name="Shimizu F."/>
            <person name="Wakebe H."/>
            <person name="Hishigaki H."/>
            <person name="Watanabe T."/>
            <person name="Sugiyama A."/>
            <person name="Takemoto M."/>
            <person name="Kawakami B."/>
            <person name="Yamazaki M."/>
            <person name="Watanabe K."/>
            <person name="Kumagai A."/>
            <person name="Itakura S."/>
            <person name="Fukuzumi Y."/>
            <person name="Fujimori Y."/>
            <person name="Komiyama M."/>
            <person name="Tashiro H."/>
            <person name="Tanigami A."/>
            <person name="Fujiwara T."/>
            <person name="Ono T."/>
            <person name="Yamada K."/>
            <person name="Fujii Y."/>
            <person name="Ozaki K."/>
            <person name="Hirao M."/>
            <person name="Ohmori Y."/>
            <person name="Kawabata A."/>
            <person name="Hikiji T."/>
            <person name="Kobatake N."/>
            <person name="Inagaki H."/>
            <person name="Ikema Y."/>
            <person name="Okamoto S."/>
            <person name="Okitani R."/>
            <person name="Kawakami T."/>
            <person name="Noguchi S."/>
            <person name="Itoh T."/>
            <person name="Shigeta K."/>
            <person name="Senba T."/>
            <person name="Matsumura K."/>
            <person name="Nakajima Y."/>
            <person name="Mizuno T."/>
            <person name="Morinaga M."/>
            <person name="Sasaki M."/>
            <person name="Togashi T."/>
            <person name="Oyama M."/>
            <person name="Hata H."/>
            <person name="Watanabe M."/>
            <person name="Komatsu T."/>
            <person name="Mizushima-Sugano J."/>
            <person name="Satoh T."/>
            <person name="Shirai Y."/>
            <person name="Takahashi Y."/>
            <person name="Nakagawa K."/>
            <person name="Okumura K."/>
            <person name="Nagase T."/>
            <person name="Nomura N."/>
            <person name="Kikuchi H."/>
            <person name="Masuho Y."/>
            <person name="Yamashita R."/>
            <person name="Nakai K."/>
            <person name="Yada T."/>
            <person name="Nakamura Y."/>
            <person name="Ohara O."/>
            <person name="Isogai T."/>
            <person name="Sugano S."/>
        </authorList>
    </citation>
    <scope>NUCLEOTIDE SEQUENCE [LARGE SCALE MRNA] (ISOFORMS 6 AND 7)</scope>
    <scope>VARIANTS GLU-482 AND ILE-668</scope>
    <source>
        <tissue>Brain</tissue>
        <tissue>Testis</tissue>
    </source>
</reference>
<reference key="5">
    <citation type="journal article" date="2004" name="Nature">
        <title>DNA sequence and analysis of human chromosome 9.</title>
        <authorList>
            <person name="Humphray S.J."/>
            <person name="Oliver K."/>
            <person name="Hunt A.R."/>
            <person name="Plumb R.W."/>
            <person name="Loveland J.E."/>
            <person name="Howe K.L."/>
            <person name="Andrews T.D."/>
            <person name="Searle S."/>
            <person name="Hunt S.E."/>
            <person name="Scott C.E."/>
            <person name="Jones M.C."/>
            <person name="Ainscough R."/>
            <person name="Almeida J.P."/>
            <person name="Ambrose K.D."/>
            <person name="Ashwell R.I.S."/>
            <person name="Babbage A.K."/>
            <person name="Babbage S."/>
            <person name="Bagguley C.L."/>
            <person name="Bailey J."/>
            <person name="Banerjee R."/>
            <person name="Barker D.J."/>
            <person name="Barlow K.F."/>
            <person name="Bates K."/>
            <person name="Beasley H."/>
            <person name="Beasley O."/>
            <person name="Bird C.P."/>
            <person name="Bray-Allen S."/>
            <person name="Brown A.J."/>
            <person name="Brown J.Y."/>
            <person name="Burford D."/>
            <person name="Burrill W."/>
            <person name="Burton J."/>
            <person name="Carder C."/>
            <person name="Carter N.P."/>
            <person name="Chapman J.C."/>
            <person name="Chen Y."/>
            <person name="Clarke G."/>
            <person name="Clark S.Y."/>
            <person name="Clee C.M."/>
            <person name="Clegg S."/>
            <person name="Collier R.E."/>
            <person name="Corby N."/>
            <person name="Crosier M."/>
            <person name="Cummings A.T."/>
            <person name="Davies J."/>
            <person name="Dhami P."/>
            <person name="Dunn M."/>
            <person name="Dutta I."/>
            <person name="Dyer L.W."/>
            <person name="Earthrowl M.E."/>
            <person name="Faulkner L."/>
            <person name="Fleming C.J."/>
            <person name="Frankish A."/>
            <person name="Frankland J.A."/>
            <person name="French L."/>
            <person name="Fricker D.G."/>
            <person name="Garner P."/>
            <person name="Garnett J."/>
            <person name="Ghori J."/>
            <person name="Gilbert J.G.R."/>
            <person name="Glison C."/>
            <person name="Grafham D.V."/>
            <person name="Gribble S."/>
            <person name="Griffiths C."/>
            <person name="Griffiths-Jones S."/>
            <person name="Grocock R."/>
            <person name="Guy J."/>
            <person name="Hall R.E."/>
            <person name="Hammond S."/>
            <person name="Harley J.L."/>
            <person name="Harrison E.S.I."/>
            <person name="Hart E.A."/>
            <person name="Heath P.D."/>
            <person name="Henderson C.D."/>
            <person name="Hopkins B.L."/>
            <person name="Howard P.J."/>
            <person name="Howden P.J."/>
            <person name="Huckle E."/>
            <person name="Johnson C."/>
            <person name="Johnson D."/>
            <person name="Joy A.A."/>
            <person name="Kay M."/>
            <person name="Keenan S."/>
            <person name="Kershaw J.K."/>
            <person name="Kimberley A.M."/>
            <person name="King A."/>
            <person name="Knights A."/>
            <person name="Laird G.K."/>
            <person name="Langford C."/>
            <person name="Lawlor S."/>
            <person name="Leongamornlert D.A."/>
            <person name="Leversha M."/>
            <person name="Lloyd C."/>
            <person name="Lloyd D.M."/>
            <person name="Lovell J."/>
            <person name="Martin S."/>
            <person name="Mashreghi-Mohammadi M."/>
            <person name="Matthews L."/>
            <person name="McLaren S."/>
            <person name="McLay K.E."/>
            <person name="McMurray A."/>
            <person name="Milne S."/>
            <person name="Nickerson T."/>
            <person name="Nisbett J."/>
            <person name="Nordsiek G."/>
            <person name="Pearce A.V."/>
            <person name="Peck A.I."/>
            <person name="Porter K.M."/>
            <person name="Pandian R."/>
            <person name="Pelan S."/>
            <person name="Phillimore B."/>
            <person name="Povey S."/>
            <person name="Ramsey Y."/>
            <person name="Rand V."/>
            <person name="Scharfe M."/>
            <person name="Sehra H.K."/>
            <person name="Shownkeen R."/>
            <person name="Sims S.K."/>
            <person name="Skuce C.D."/>
            <person name="Smith M."/>
            <person name="Steward C.A."/>
            <person name="Swarbreck D."/>
            <person name="Sycamore N."/>
            <person name="Tester J."/>
            <person name="Thorpe A."/>
            <person name="Tracey A."/>
            <person name="Tromans A."/>
            <person name="Thomas D.W."/>
            <person name="Wall M."/>
            <person name="Wallis J.M."/>
            <person name="West A.P."/>
            <person name="Whitehead S.L."/>
            <person name="Willey D.L."/>
            <person name="Williams S.A."/>
            <person name="Wilming L."/>
            <person name="Wray P.W."/>
            <person name="Young L."/>
            <person name="Ashurst J.L."/>
            <person name="Coulson A."/>
            <person name="Blocker H."/>
            <person name="Durbin R.M."/>
            <person name="Sulston J.E."/>
            <person name="Hubbard T."/>
            <person name="Jackson M.J."/>
            <person name="Bentley D.R."/>
            <person name="Beck S."/>
            <person name="Rogers J."/>
            <person name="Dunham I."/>
        </authorList>
    </citation>
    <scope>NUCLEOTIDE SEQUENCE [LARGE SCALE GENOMIC DNA]</scope>
</reference>
<reference key="6">
    <citation type="journal article" date="2004" name="Genome Res.">
        <title>The status, quality, and expansion of the NIH full-length cDNA project: the Mammalian Gene Collection (MGC).</title>
        <authorList>
            <consortium name="The MGC Project Team"/>
        </authorList>
    </citation>
    <scope>NUCLEOTIDE SEQUENCE [LARGE SCALE MRNA] (ISOFORM A1)</scope>
    <source>
        <tissue>Testis</tissue>
    </source>
</reference>
<reference key="7">
    <citation type="journal article" date="1999" name="Int. J. Cancer">
        <title>Tight junction protein ZO-2 is differentially expressed in normal pancreatic ducts compared to human pancreatic adenocarcinoma.</title>
        <authorList>
            <person name="Chlenski A."/>
            <person name="Ketels K.V."/>
            <person name="Tsao M.-S."/>
            <person name="Talamonti M.S."/>
            <person name="Anderson M.R."/>
            <person name="Oyasu R."/>
            <person name="Scarpelli D.G."/>
        </authorList>
    </citation>
    <scope>NUCLEOTIDE SEQUENCE [MRNA] OF 1-166 (ISOFORMS A1/A2/A3)</scope>
    <scope>NUCLEOTIDE SEQUENCE [MRNA] OF 1-119 (ISOFORMS C1/C2)</scope>
    <source>
        <tissue>Pancreas</tissue>
    </source>
</reference>
<reference key="8">
    <citation type="journal article" date="1999" name="Int. J. Cancer">
        <title>Zo-2 gene alternative promoters in normal and neoplastic human pancreatic duct cells.</title>
        <authorList>
            <person name="Chlenski A."/>
            <person name="Ketels K.V."/>
            <person name="Engeriser J.L."/>
            <person name="Talamonti M.S."/>
            <person name="Tsao M.-S."/>
            <person name="Koutnikova H."/>
            <person name="Oyasu R."/>
            <person name="Scarpelli D.G."/>
        </authorList>
    </citation>
    <scope>PARTIAL NUCLEOTIDE SEQUENCE (ISOFORMS A1 AND C1)</scope>
    <scope>ALTERNATIVE PROMOTER USAGE</scope>
    <source>
        <tissue>Pancreas</tissue>
    </source>
</reference>
<reference key="9">
    <citation type="submission" date="1997-01" db="EMBL/GenBank/DDBJ databases">
        <authorList>
            <person name="Adams L.D."/>
            <person name="Werny I."/>
            <person name="Schwartz S.M."/>
        </authorList>
    </citation>
    <scope>NUCLEOTIDE SEQUENCE [MRNA] OF 1047-1167</scope>
    <source>
        <tissue>Aortic smooth muscle</tissue>
    </source>
</reference>
<reference key="10">
    <citation type="journal article" date="2005" name="FEBS Lett.">
        <title>hScrib interacts with ZO-2 at the cell-cell junctions of epithelial cells.</title>
        <authorList>
            <person name="Metais J.-Y."/>
            <person name="Navarro C."/>
            <person name="Santoni M.-J."/>
            <person name="Audebert S."/>
            <person name="Borg J.-P."/>
        </authorList>
    </citation>
    <scope>INTERACTION WITH SCRIB</scope>
</reference>
<reference key="11">
    <citation type="journal article" date="2006" name="Cell">
        <title>Global, in vivo, and site-specific phosphorylation dynamics in signaling networks.</title>
        <authorList>
            <person name="Olsen J.V."/>
            <person name="Blagoev B."/>
            <person name="Gnad F."/>
            <person name="Macek B."/>
            <person name="Kumar C."/>
            <person name="Mortensen P."/>
            <person name="Mann M."/>
        </authorList>
    </citation>
    <scope>PHOSPHORYLATION [LARGE SCALE ANALYSIS] AT SER-130</scope>
    <scope>IDENTIFICATION BY MASS SPECTROMETRY [LARGE SCALE ANALYSIS]</scope>
    <source>
        <tissue>Cervix carcinoma</tissue>
    </source>
</reference>
<reference key="12">
    <citation type="journal article" date="2008" name="J. Proteome Res.">
        <title>Phosphoproteome of resting human platelets.</title>
        <authorList>
            <person name="Zahedi R.P."/>
            <person name="Lewandrowski U."/>
            <person name="Wiesner J."/>
            <person name="Wortelkamp S."/>
            <person name="Moebius J."/>
            <person name="Schuetz C."/>
            <person name="Walter U."/>
            <person name="Gambaryan S."/>
            <person name="Sickmann A."/>
        </authorList>
    </citation>
    <scope>PHOSPHORYLATION [LARGE SCALE ANALYSIS] AT SER-174; SER-244; SER-702; SER-966 AND SER-986</scope>
    <scope>IDENTIFICATION BY MASS SPECTROMETRY [LARGE SCALE ANALYSIS]</scope>
    <source>
        <tissue>Platelet</tissue>
    </source>
</reference>
<reference key="13">
    <citation type="journal article" date="2008" name="Proc. Natl. Acad. Sci. U.S.A.">
        <title>A quantitative atlas of mitotic phosphorylation.</title>
        <authorList>
            <person name="Dephoure N."/>
            <person name="Zhou C."/>
            <person name="Villen J."/>
            <person name="Beausoleil S.A."/>
            <person name="Bakalarski C.E."/>
            <person name="Elledge S.J."/>
            <person name="Gygi S.P."/>
        </authorList>
    </citation>
    <scope>PHOSPHORYLATION [LARGE SCALE ANALYSIS] AT SER-170; SER-174; SER-244; SER-266; SER-400; THR-455; SER-920; THR-925; THR-933; SER-978; SER-986; SER-1067; SER-1068; THR-1131 AND SER-1159</scope>
    <scope>IDENTIFICATION BY MASS SPECTROMETRY [LARGE SCALE ANALYSIS]</scope>
    <source>
        <tissue>Cervix carcinoma</tissue>
    </source>
</reference>
<reference key="14">
    <citation type="journal article" date="2008" name="Proteomics">
        <title>Large-scale phosphoproteome analysis of human liver tissue by enrichment and fractionation of phosphopeptides with strong anion exchange chromatography.</title>
        <authorList>
            <person name="Han G."/>
            <person name="Ye M."/>
            <person name="Zhou H."/>
            <person name="Jiang X."/>
            <person name="Feng S."/>
            <person name="Jiang X."/>
            <person name="Tian R."/>
            <person name="Wan D."/>
            <person name="Zou H."/>
            <person name="Gu J."/>
        </authorList>
    </citation>
    <scope>IDENTIFICATION BY MASS SPECTROMETRY [LARGE SCALE ANALYSIS]</scope>
    <source>
        <tissue>Liver</tissue>
    </source>
</reference>
<reference key="15">
    <citation type="journal article" date="2009" name="Anal. Chem.">
        <title>Lys-N and trypsin cover complementary parts of the phosphoproteome in a refined SCX-based approach.</title>
        <authorList>
            <person name="Gauci S."/>
            <person name="Helbig A.O."/>
            <person name="Slijper M."/>
            <person name="Krijgsveld J."/>
            <person name="Heck A.J."/>
            <person name="Mohammed S."/>
        </authorList>
    </citation>
    <scope>IDENTIFICATION BY MASS SPECTROMETRY [LARGE SCALE ANALYSIS]</scope>
</reference>
<reference key="16">
    <citation type="journal article" date="2009" name="Biol. Cell">
        <title>Characterization of the ubinuclein protein as a new member of the nuclear and adhesion complex components (NACos).</title>
        <authorList>
            <person name="Aho S."/>
            <person name="Lupo J."/>
            <person name="Coly P.-A."/>
            <person name="Sabine A."/>
            <person name="Castellazzi M."/>
            <person name="Morand P."/>
            <person name="Sergeant A."/>
            <person name="Manet E."/>
            <person name="Boyer V."/>
            <person name="Gruffat H."/>
        </authorList>
    </citation>
    <scope>INTERACTION WITH UBN1</scope>
</reference>
<reference key="17">
    <citation type="journal article" date="2009" name="Sci. Signal.">
        <title>Quantitative phosphoproteomic analysis of T cell receptor signaling reveals system-wide modulation of protein-protein interactions.</title>
        <authorList>
            <person name="Mayya V."/>
            <person name="Lundgren D.H."/>
            <person name="Hwang S.-I."/>
            <person name="Rezaul K."/>
            <person name="Wu L."/>
            <person name="Eng J.K."/>
            <person name="Rodionov V."/>
            <person name="Han D.K."/>
        </authorList>
    </citation>
    <scope>PHOSPHORYLATION [LARGE SCALE ANALYSIS] AT SER-244 AND SER-1159</scope>
    <scope>IDENTIFICATION BY MASS SPECTROMETRY [LARGE SCALE ANALYSIS]</scope>
    <source>
        <tissue>Leukemic T-cell</tissue>
    </source>
</reference>
<reference key="18">
    <citation type="journal article" date="2010" name="Sci. Signal.">
        <title>Quantitative phosphoproteomics reveals widespread full phosphorylation site occupancy during mitosis.</title>
        <authorList>
            <person name="Olsen J.V."/>
            <person name="Vermeulen M."/>
            <person name="Santamaria A."/>
            <person name="Kumar C."/>
            <person name="Miller M.L."/>
            <person name="Jensen L.J."/>
            <person name="Gnad F."/>
            <person name="Cox J."/>
            <person name="Jensen T.S."/>
            <person name="Nigg E.A."/>
            <person name="Brunak S."/>
            <person name="Mann M."/>
        </authorList>
    </citation>
    <scope>PHOSPHORYLATION [LARGE SCALE ANALYSIS] AT SER-130; SER-170; SER-174; SER-244; SER-920; THR-925; SER-986 AND SER-1159</scope>
    <scope>IDENTIFICATION BY MASS SPECTROMETRY [LARGE SCALE ANALYSIS]</scope>
    <source>
        <tissue>Cervix carcinoma</tissue>
    </source>
</reference>
<reference key="19">
    <citation type="journal article" date="2011" name="Sci. Signal.">
        <title>System-wide temporal characterization of the proteome and phosphoproteome of human embryonic stem cell differentiation.</title>
        <authorList>
            <person name="Rigbolt K.T."/>
            <person name="Prokhorova T.A."/>
            <person name="Akimov V."/>
            <person name="Henningsen J."/>
            <person name="Johansen P.T."/>
            <person name="Kratchmarova I."/>
            <person name="Kassem M."/>
            <person name="Mann M."/>
            <person name="Olsen J.V."/>
            <person name="Blagoev B."/>
        </authorList>
    </citation>
    <scope>PHOSPHORYLATION [LARGE SCALE ANALYSIS] AT SER-130; SER-153; SER-168; SER-174; SER-200; SER-220; SER-244; SER-430; SER-978; SER-986; SER-1067; SER-1068; SER-1147 AND SER-1159</scope>
    <scope>IDENTIFICATION BY MASS SPECTROMETRY [LARGE SCALE ANALYSIS]</scope>
</reference>
<reference key="20">
    <citation type="journal article" date="2013" name="J. Proteome Res.">
        <title>Toward a comprehensive characterization of a human cancer cell phosphoproteome.</title>
        <authorList>
            <person name="Zhou H."/>
            <person name="Di Palma S."/>
            <person name="Preisinger C."/>
            <person name="Peng M."/>
            <person name="Polat A.N."/>
            <person name="Heck A.J."/>
            <person name="Mohammed S."/>
        </authorList>
    </citation>
    <scope>PHOSPHORYLATION [LARGE SCALE ANALYSIS] AT SER-16; SER-130; SER-150; SER-170; SER-174; SER-232; SER-244; SER-266; SER-415; SER-424; SER-430; SER-431; THR-455; SER-499; SER-913; SER-966; SER-978; SER-986; SER-1067; TYR-1118 AND SER-1159</scope>
    <scope>IDENTIFICATION BY MASS SPECTROMETRY [LARGE SCALE ANALYSIS]</scope>
    <source>
        <tissue>Cervix carcinoma</tissue>
        <tissue>Erythroleukemia</tissue>
    </source>
</reference>
<reference key="21">
    <citation type="journal article" date="2014" name="J. Proteomics">
        <title>An enzyme assisted RP-RPLC approach for in-depth analysis of human liver phosphoproteome.</title>
        <authorList>
            <person name="Bian Y."/>
            <person name="Song C."/>
            <person name="Cheng K."/>
            <person name="Dong M."/>
            <person name="Wang F."/>
            <person name="Huang J."/>
            <person name="Sun D."/>
            <person name="Wang L."/>
            <person name="Ye M."/>
            <person name="Zou H."/>
        </authorList>
    </citation>
    <scope>PHOSPHORYLATION [LARGE SCALE ANALYSIS] AT SER-130; SER-325; SER-406; SER-431; SER-702; SER-966; SER-978; SER-986 AND SER-1159</scope>
    <scope>IDENTIFICATION BY MASS SPECTROMETRY [LARGE SCALE ANALYSIS]</scope>
    <source>
        <tissue>Liver</tissue>
    </source>
</reference>
<reference key="22">
    <citation type="journal article" date="2014" name="Nat. Genet.">
        <title>Mutations in TJP2 cause progressive cholestatic liver disease.</title>
        <authorList>
            <person name="Sambrotta M."/>
            <person name="Strautnieks S."/>
            <person name="Papouli E."/>
            <person name="Rushton P."/>
            <person name="Clark B.E."/>
            <person name="Parry D.A."/>
            <person name="Logan C.V."/>
            <person name="Newbury L.J."/>
            <person name="Kamath B.M."/>
            <person name="Ling S."/>
            <person name="Grammatikopoulos T."/>
            <person name="Wagner B.E."/>
            <person name="Magee J.C."/>
            <person name="Sokol R.J."/>
            <person name="Mieli-Vergani G."/>
            <person name="Smith J.D."/>
            <person name="Johnson C.A."/>
            <person name="McClean P."/>
            <person name="Simpson M.A."/>
            <person name="Knisely A.S."/>
            <person name="Bull L.N."/>
            <person name="Thompson R.J."/>
        </authorList>
    </citation>
    <scope>INVOLVEMENT IN PFIC4</scope>
</reference>
<reference key="23">
    <citation type="journal article" date="2007" name="J. Biol. Chem.">
        <title>Domain-swapped dimerization of the second PDZ domain of ZO2 may provide a structural basis for the polymerization of claudins.</title>
        <authorList>
            <person name="Wu J."/>
            <person name="Yang Y."/>
            <person name="Zhang J."/>
            <person name="Ji P."/>
            <person name="Du W."/>
            <person name="Jiang P."/>
            <person name="Xie D."/>
            <person name="Huang H."/>
            <person name="Wu M."/>
            <person name="Zhang G."/>
            <person name="Wu J."/>
            <person name="Shi Y."/>
        </authorList>
    </citation>
    <scope>STRUCTURE BY NMR OF 306-385</scope>
    <scope>HOMODIMERIZATION</scope>
    <scope>INTERACTION WITH TJP1</scope>
</reference>
<reference key="24">
    <citation type="journal article" date="2003" name="Nat. Genet.">
        <title>Complex inheritance of familial hypercholanemia with associated mutations in TJP2 and BAAT.</title>
        <authorList>
            <person name="Carlton V.E.H."/>
            <person name="Harris B.Z."/>
            <person name="Puffenberger E.G."/>
            <person name="Batta A.K."/>
            <person name="Knisely A.S."/>
            <person name="Robinson D.L."/>
            <person name="Strauss K.A."/>
            <person name="Shneider B.L."/>
            <person name="Lim W.A."/>
            <person name="Salen G."/>
            <person name="Morton D.H."/>
            <person name="Bull L.N."/>
        </authorList>
    </citation>
    <scope>VARIANT FHCA1 ALA-48</scope>
    <scope>CHARACTERIZATION OF VARIANT FHCA1 ALA-48</scope>
    <scope>INTERACTION WITH CLDN1; CLDN2; CLDN3; CLDN5 AND CLDN7</scope>
</reference>
<reference key="25">
    <citation type="journal article" date="2011" name="BMC Syst. Biol.">
        <title>Initial characterization of the human central proteome.</title>
        <authorList>
            <person name="Burkard T.R."/>
            <person name="Planyavsky M."/>
            <person name="Kaupe I."/>
            <person name="Breitwieser F.P."/>
            <person name="Buerckstuemmer T."/>
            <person name="Bennett K.L."/>
            <person name="Superti-Furga G."/>
            <person name="Colinge J."/>
        </authorList>
    </citation>
    <scope>VARIANT [LARGE SCALE ANALYSIS] GLU-482</scope>
    <scope>IDENTIFICATION BY MASS SPECTROMETRY [LARGE SCALE ANALYSIS]</scope>
</reference>